<comment type="function">
    <text evidence="1">Catalyzes the final step of fatty acid oxidation in which acetyl-CoA is released and the CoA ester of a fatty acid two carbons shorter is formed.</text>
</comment>
<comment type="catalytic activity">
    <reaction evidence="1">
        <text>an acyl-CoA + acetyl-CoA = a 3-oxoacyl-CoA + CoA</text>
        <dbReference type="Rhea" id="RHEA:21564"/>
        <dbReference type="ChEBI" id="CHEBI:57287"/>
        <dbReference type="ChEBI" id="CHEBI:57288"/>
        <dbReference type="ChEBI" id="CHEBI:58342"/>
        <dbReference type="ChEBI" id="CHEBI:90726"/>
        <dbReference type="EC" id="2.3.1.16"/>
    </reaction>
</comment>
<comment type="pathway">
    <text evidence="1">Lipid metabolism; fatty acid beta-oxidation.</text>
</comment>
<comment type="subunit">
    <text evidence="1">Heterotetramer of two alpha chains (FadJ) and two beta chains (FadI).</text>
</comment>
<comment type="subcellular location">
    <subcellularLocation>
        <location evidence="1">Cytoplasm</location>
    </subcellularLocation>
</comment>
<comment type="similarity">
    <text evidence="1">Belongs to the thiolase-like superfamily. Thiolase family.</text>
</comment>
<keyword id="KW-0012">Acyltransferase</keyword>
<keyword id="KW-0963">Cytoplasm</keyword>
<keyword id="KW-0276">Fatty acid metabolism</keyword>
<keyword id="KW-0442">Lipid degradation</keyword>
<keyword id="KW-0443">Lipid metabolism</keyword>
<keyword id="KW-0808">Transferase</keyword>
<gene>
    <name evidence="1" type="primary">fadI</name>
    <name type="ordered locus">VV1_1975</name>
</gene>
<protein>
    <recommendedName>
        <fullName evidence="1">3-ketoacyl-CoA thiolase</fullName>
        <ecNumber evidence="1">2.3.1.16</ecNumber>
    </recommendedName>
    <alternativeName>
        <fullName evidence="1">ACSs</fullName>
    </alternativeName>
    <alternativeName>
        <fullName evidence="1">Acetyl-CoA acyltransferase</fullName>
    </alternativeName>
    <alternativeName>
        <fullName evidence="1">Acyl-CoA ligase</fullName>
    </alternativeName>
    <alternativeName>
        <fullName evidence="1">Beta-ketothiolase</fullName>
    </alternativeName>
    <alternativeName>
        <fullName evidence="1">Fatty acid oxidation complex subunit beta</fullName>
    </alternativeName>
</protein>
<feature type="chain" id="PRO_0000206452" description="3-ketoacyl-CoA thiolase">
    <location>
        <begin position="1"/>
        <end position="435"/>
    </location>
</feature>
<feature type="active site" description="Acyl-thioester intermediate" evidence="1">
    <location>
        <position position="98"/>
    </location>
</feature>
<feature type="active site" description="Proton acceptor" evidence="1">
    <location>
        <position position="391"/>
    </location>
</feature>
<feature type="active site" description="Proton acceptor" evidence="1">
    <location>
        <position position="421"/>
    </location>
</feature>
<organism>
    <name type="scientific">Vibrio vulnificus (strain CMCP6)</name>
    <dbReference type="NCBI Taxonomy" id="216895"/>
    <lineage>
        <taxon>Bacteria</taxon>
        <taxon>Pseudomonadati</taxon>
        <taxon>Pseudomonadota</taxon>
        <taxon>Gammaproteobacteria</taxon>
        <taxon>Vibrionales</taxon>
        <taxon>Vibrionaceae</taxon>
        <taxon>Vibrio</taxon>
    </lineage>
</organism>
<sequence>MGKQEVKTRQGERVAIVAGLRTPFARQSTEFSQVPAVDLGKMVVSDLLARTDIDPKLIEQVVFGQVVQMPEAPNIAREIVLGTGMNIHTDAYSVTRACATSFQSAVNVAESIMAGAIDIGIAGGADSSSVLPIGVSKKLAASLLALSKTKTLGQKLKVLSGLGLKDLMPVPPAVAEYSTGLSMGQTAEQMAKTHGITRAEQDALAHRSHTLASQAWRDGKIAGEVMTAFPEPYKKWIAEDNNIRHDSTLEGYAKLRPAFDRQYGSVTAANSTPLTDGAAAVLLMREGRAKELGMEILGYIRGYAFSAIGVESDMLMGPSYATSKVLQSTGLALSDLTLIDMHEAFAAQALANVKMFASDKFAQENLGRSKAMGEIDMDKFNVLGGSIAYGHPFAATGARMMTQTLRELKRRGGGLALNTACAAGGLGAAMILEVE</sequence>
<dbReference type="EC" id="2.3.1.16" evidence="1"/>
<dbReference type="EMBL" id="AE016795">
    <property type="protein sequence ID" value="AAO10375.1"/>
    <property type="molecule type" value="Genomic_DNA"/>
</dbReference>
<dbReference type="RefSeq" id="WP_011079874.1">
    <property type="nucleotide sequence ID" value="NC_004459.3"/>
</dbReference>
<dbReference type="SMR" id="Q8DB48"/>
<dbReference type="KEGG" id="vvu:VV1_1975"/>
<dbReference type="HOGENOM" id="CLU_031026_2_0_6"/>
<dbReference type="UniPathway" id="UPA00659"/>
<dbReference type="Proteomes" id="UP000002275">
    <property type="component" value="Chromosome 1"/>
</dbReference>
<dbReference type="GO" id="GO:0005829">
    <property type="term" value="C:cytosol"/>
    <property type="evidence" value="ECO:0007669"/>
    <property type="project" value="TreeGrafter"/>
</dbReference>
<dbReference type="GO" id="GO:0003988">
    <property type="term" value="F:acetyl-CoA C-acyltransferase activity"/>
    <property type="evidence" value="ECO:0007669"/>
    <property type="project" value="UniProtKB-UniRule"/>
</dbReference>
<dbReference type="GO" id="GO:0006635">
    <property type="term" value="P:fatty acid beta-oxidation"/>
    <property type="evidence" value="ECO:0007669"/>
    <property type="project" value="UniProtKB-UniRule"/>
</dbReference>
<dbReference type="CDD" id="cd00751">
    <property type="entry name" value="thiolase"/>
    <property type="match status" value="1"/>
</dbReference>
<dbReference type="FunFam" id="3.40.47.10:FF:000011">
    <property type="entry name" value="3-ketoacyl-CoA thiolase"/>
    <property type="match status" value="1"/>
</dbReference>
<dbReference type="Gene3D" id="3.40.47.10">
    <property type="match status" value="1"/>
</dbReference>
<dbReference type="HAMAP" id="MF_01618">
    <property type="entry name" value="FadI"/>
    <property type="match status" value="1"/>
</dbReference>
<dbReference type="InterPro" id="IPR012806">
    <property type="entry name" value="Ac-CoA_C-AcTrfase_FadI"/>
</dbReference>
<dbReference type="InterPro" id="IPR002155">
    <property type="entry name" value="Thiolase"/>
</dbReference>
<dbReference type="InterPro" id="IPR016039">
    <property type="entry name" value="Thiolase-like"/>
</dbReference>
<dbReference type="InterPro" id="IPR020617">
    <property type="entry name" value="Thiolase_C"/>
</dbReference>
<dbReference type="InterPro" id="IPR020613">
    <property type="entry name" value="Thiolase_CS"/>
</dbReference>
<dbReference type="InterPro" id="IPR020616">
    <property type="entry name" value="Thiolase_N"/>
</dbReference>
<dbReference type="NCBIfam" id="TIGR01930">
    <property type="entry name" value="AcCoA-C-Actrans"/>
    <property type="match status" value="1"/>
</dbReference>
<dbReference type="NCBIfam" id="TIGR02446">
    <property type="entry name" value="FadI"/>
    <property type="match status" value="1"/>
</dbReference>
<dbReference type="NCBIfam" id="NF006516">
    <property type="entry name" value="PRK08963.1"/>
    <property type="match status" value="1"/>
</dbReference>
<dbReference type="PANTHER" id="PTHR18919:SF107">
    <property type="entry name" value="ACETYL-COA ACETYLTRANSFERASE, CYTOSOLIC"/>
    <property type="match status" value="1"/>
</dbReference>
<dbReference type="PANTHER" id="PTHR18919">
    <property type="entry name" value="ACETYL-COA C-ACYLTRANSFERASE"/>
    <property type="match status" value="1"/>
</dbReference>
<dbReference type="Pfam" id="PF02803">
    <property type="entry name" value="Thiolase_C"/>
    <property type="match status" value="1"/>
</dbReference>
<dbReference type="Pfam" id="PF00108">
    <property type="entry name" value="Thiolase_N"/>
    <property type="match status" value="1"/>
</dbReference>
<dbReference type="PIRSF" id="PIRSF000429">
    <property type="entry name" value="Ac-CoA_Ac_transf"/>
    <property type="match status" value="1"/>
</dbReference>
<dbReference type="SUPFAM" id="SSF53901">
    <property type="entry name" value="Thiolase-like"/>
    <property type="match status" value="2"/>
</dbReference>
<dbReference type="PROSITE" id="PS00737">
    <property type="entry name" value="THIOLASE_2"/>
    <property type="match status" value="1"/>
</dbReference>
<name>FADI_VIBVU</name>
<proteinExistence type="inferred from homology"/>
<accession>Q8DB48</accession>
<reference key="1">
    <citation type="submission" date="2002-12" db="EMBL/GenBank/DDBJ databases">
        <title>Complete genome sequence of Vibrio vulnificus CMCP6.</title>
        <authorList>
            <person name="Rhee J.H."/>
            <person name="Kim S.Y."/>
            <person name="Chung S.S."/>
            <person name="Kim J.J."/>
            <person name="Moon Y.H."/>
            <person name="Jeong H."/>
            <person name="Choy H.E."/>
        </authorList>
    </citation>
    <scope>NUCLEOTIDE SEQUENCE [LARGE SCALE GENOMIC DNA]</scope>
    <source>
        <strain>CMCP6</strain>
    </source>
</reference>
<evidence type="ECO:0000255" key="1">
    <source>
        <dbReference type="HAMAP-Rule" id="MF_01618"/>
    </source>
</evidence>